<evidence type="ECO:0000255" key="1">
    <source>
        <dbReference type="HAMAP-Rule" id="MF_00430"/>
    </source>
</evidence>
<evidence type="ECO:0000269" key="2">
    <source>
    </source>
</evidence>
<evidence type="ECO:0000269" key="3">
    <source>
    </source>
</evidence>
<evidence type="ECO:0000269" key="4">
    <source>
    </source>
</evidence>
<evidence type="ECO:0000303" key="5">
    <source>
    </source>
</evidence>
<evidence type="ECO:0000305" key="6"/>
<evidence type="ECO:0007829" key="7">
    <source>
        <dbReference type="PDB" id="7XK7"/>
    </source>
</evidence>
<evidence type="ECO:0007829" key="8">
    <source>
        <dbReference type="PDB" id="8A1V"/>
    </source>
</evidence>
<evidence type="ECO:0007829" key="9">
    <source>
        <dbReference type="PDB" id="8A1W"/>
    </source>
</evidence>
<evidence type="ECO:0007829" key="10">
    <source>
        <dbReference type="PDB" id="8AD4"/>
    </source>
</evidence>
<comment type="function">
    <text evidence="1">NQR complex catalyzes the reduction of ubiquinone-1 to ubiquinol by two successive reactions, coupled with the transport of Na(+) ions from the cytoplasm to the periplasm. The first step is catalyzed by NqrF, which accepts electrons from NADH and reduces ubiquinone-1 to ubisemiquinone by a one-electron transfer pathway.</text>
</comment>
<comment type="catalytic activity">
    <reaction evidence="1 2">
        <text>a ubiquinone + n Na(+)(in) + NADH + H(+) = a ubiquinol + n Na(+)(out) + NAD(+)</text>
        <dbReference type="Rhea" id="RHEA:47748"/>
        <dbReference type="Rhea" id="RHEA-COMP:9565"/>
        <dbReference type="Rhea" id="RHEA-COMP:9566"/>
        <dbReference type="ChEBI" id="CHEBI:15378"/>
        <dbReference type="ChEBI" id="CHEBI:16389"/>
        <dbReference type="ChEBI" id="CHEBI:17976"/>
        <dbReference type="ChEBI" id="CHEBI:29101"/>
        <dbReference type="ChEBI" id="CHEBI:57540"/>
        <dbReference type="ChEBI" id="CHEBI:57945"/>
        <dbReference type="EC" id="7.2.1.1"/>
    </reaction>
</comment>
<comment type="cofactor">
    <cofactor evidence="1 3">
        <name>[2Fe-2S] cluster</name>
        <dbReference type="ChEBI" id="CHEBI:190135"/>
    </cofactor>
    <text evidence="1 3">Binds 1 [2Fe-2S] cluster.</text>
</comment>
<comment type="cofactor">
    <cofactor evidence="1 3">
        <name>FAD</name>
        <dbReference type="ChEBI" id="CHEBI:57692"/>
    </cofactor>
</comment>
<comment type="subunit">
    <text evidence="1 2 4">Composed of six subunits; NqrA, NqrB, NqrC, NqrD, NqrE and NqrF.</text>
</comment>
<comment type="subcellular location">
    <subcellularLocation>
        <location evidence="1 6">Cell inner membrane</location>
        <topology evidence="1">Single-pass membrane protein</topology>
    </subcellularLocation>
</comment>
<comment type="similarity">
    <text evidence="1 6">Belongs to the NqrF family.</text>
</comment>
<dbReference type="EC" id="7.2.1.1" evidence="1 2"/>
<dbReference type="EMBL" id="CP000627">
    <property type="protein sequence ID" value="ABQ21559.1"/>
    <property type="molecule type" value="Genomic_DNA"/>
</dbReference>
<dbReference type="EMBL" id="CP001235">
    <property type="protein sequence ID" value="ACP10396.1"/>
    <property type="molecule type" value="Genomic_DNA"/>
</dbReference>
<dbReference type="RefSeq" id="WP_000103964.1">
    <property type="nucleotide sequence ID" value="NZ_JAACZH010000008.1"/>
</dbReference>
<dbReference type="PDB" id="4UAJ">
    <property type="method" value="X-ray"/>
    <property type="resolution" value="2.70 A"/>
    <property type="chains" value="A=129-408"/>
</dbReference>
<dbReference type="PDB" id="7XK3">
    <property type="method" value="EM"/>
    <property type="resolution" value="3.10 A"/>
    <property type="chains" value="F=1-408"/>
</dbReference>
<dbReference type="PDB" id="7XK4">
    <property type="method" value="EM"/>
    <property type="resolution" value="3.10 A"/>
    <property type="chains" value="F=1-408"/>
</dbReference>
<dbReference type="PDB" id="7XK5">
    <property type="method" value="EM"/>
    <property type="resolution" value="3.10 A"/>
    <property type="chains" value="F=1-408"/>
</dbReference>
<dbReference type="PDB" id="7XK6">
    <property type="method" value="EM"/>
    <property type="resolution" value="3.00 A"/>
    <property type="chains" value="F=1-408"/>
</dbReference>
<dbReference type="PDB" id="7XK7">
    <property type="method" value="EM"/>
    <property type="resolution" value="2.90 A"/>
    <property type="chains" value="F=1-408"/>
</dbReference>
<dbReference type="PDB" id="8A1T">
    <property type="method" value="EM"/>
    <property type="resolution" value="3.37 A"/>
    <property type="chains" value="F=1-408"/>
</dbReference>
<dbReference type="PDB" id="8A1V">
    <property type="method" value="EM"/>
    <property type="resolution" value="2.73 A"/>
    <property type="chains" value="F=1-408"/>
</dbReference>
<dbReference type="PDB" id="8A1W">
    <property type="method" value="EM"/>
    <property type="resolution" value="2.56 A"/>
    <property type="chains" value="F=1-408"/>
</dbReference>
<dbReference type="PDB" id="8A1X">
    <property type="method" value="EM"/>
    <property type="resolution" value="3.20 A"/>
    <property type="chains" value="F=1-408"/>
</dbReference>
<dbReference type="PDB" id="8A1Y">
    <property type="method" value="EM"/>
    <property type="resolution" value="3.30 A"/>
    <property type="chains" value="F=1-408"/>
</dbReference>
<dbReference type="PDB" id="8ACW">
    <property type="method" value="X-ray"/>
    <property type="resolution" value="3.40 A"/>
    <property type="chains" value="F=1-408"/>
</dbReference>
<dbReference type="PDB" id="8AD0">
    <property type="method" value="X-ray"/>
    <property type="resolution" value="3.11 A"/>
    <property type="chains" value="F=1-408"/>
</dbReference>
<dbReference type="PDB" id="8AD3">
    <property type="method" value="X-ray"/>
    <property type="resolution" value="1.55 A"/>
    <property type="chains" value="A/B=130-408"/>
</dbReference>
<dbReference type="PDB" id="8AD4">
    <property type="method" value="X-ray"/>
    <property type="resolution" value="1.50 A"/>
    <property type="chains" value="A/B=130-408"/>
</dbReference>
<dbReference type="PDB" id="8AD5">
    <property type="method" value="X-ray"/>
    <property type="resolution" value="1.65 A"/>
    <property type="chains" value="A/B=130-408"/>
</dbReference>
<dbReference type="PDB" id="8EW3">
    <property type="method" value="EM"/>
    <property type="resolution" value="2.65 A"/>
    <property type="chains" value="F=1-408"/>
</dbReference>
<dbReference type="PDBsum" id="4UAJ"/>
<dbReference type="PDBsum" id="7XK3"/>
<dbReference type="PDBsum" id="7XK4"/>
<dbReference type="PDBsum" id="7XK5"/>
<dbReference type="PDBsum" id="7XK6"/>
<dbReference type="PDBsum" id="7XK7"/>
<dbReference type="PDBsum" id="8A1T"/>
<dbReference type="PDBsum" id="8A1V"/>
<dbReference type="PDBsum" id="8A1W"/>
<dbReference type="PDBsum" id="8A1X"/>
<dbReference type="PDBsum" id="8A1Y"/>
<dbReference type="PDBsum" id="8ACW"/>
<dbReference type="PDBsum" id="8AD0"/>
<dbReference type="PDBsum" id="8AD3"/>
<dbReference type="PDBsum" id="8AD4"/>
<dbReference type="PDBsum" id="8AD5"/>
<dbReference type="PDBsum" id="8EW3"/>
<dbReference type="EMDB" id="EMD-33242"/>
<dbReference type="EMDB" id="EMD-33243"/>
<dbReference type="EMDB" id="EMD-33244"/>
<dbReference type="EMDB" id="EMD-33245"/>
<dbReference type="EMDB" id="EMD-33246"/>
<dbReference type="SMR" id="A5F5Y4"/>
<dbReference type="GeneID" id="69719088"/>
<dbReference type="KEGG" id="vco:VC0395_A1879"/>
<dbReference type="KEGG" id="vcr:VC395_2406"/>
<dbReference type="PATRIC" id="fig|345073.21.peg.2319"/>
<dbReference type="eggNOG" id="COG2871">
    <property type="taxonomic scope" value="Bacteria"/>
</dbReference>
<dbReference type="HOGENOM" id="CLU_003827_7_2_6"/>
<dbReference type="OrthoDB" id="9806195at2"/>
<dbReference type="BRENDA" id="7.2.1.1">
    <property type="organism ID" value="15862"/>
</dbReference>
<dbReference type="EvolutionaryTrace" id="A5F5Y4"/>
<dbReference type="Proteomes" id="UP000000249">
    <property type="component" value="Chromosome 2"/>
</dbReference>
<dbReference type="GO" id="GO:0005886">
    <property type="term" value="C:plasma membrane"/>
    <property type="evidence" value="ECO:0007669"/>
    <property type="project" value="UniProtKB-SubCell"/>
</dbReference>
<dbReference type="GO" id="GO:0051537">
    <property type="term" value="F:2 iron, 2 sulfur cluster binding"/>
    <property type="evidence" value="ECO:0000314"/>
    <property type="project" value="UniProtKB"/>
</dbReference>
<dbReference type="GO" id="GO:0009055">
    <property type="term" value="F:electron transfer activity"/>
    <property type="evidence" value="ECO:0007669"/>
    <property type="project" value="UniProtKB-UniRule"/>
</dbReference>
<dbReference type="GO" id="GO:0071949">
    <property type="term" value="F:FAD binding"/>
    <property type="evidence" value="ECO:0000314"/>
    <property type="project" value="UniProtKB"/>
</dbReference>
<dbReference type="GO" id="GO:0046872">
    <property type="term" value="F:metal ion binding"/>
    <property type="evidence" value="ECO:0007669"/>
    <property type="project" value="UniProtKB-KW"/>
</dbReference>
<dbReference type="GO" id="GO:0016655">
    <property type="term" value="F:oxidoreductase activity, acting on NAD(P)H, quinone or similar compound as acceptor"/>
    <property type="evidence" value="ECO:0000314"/>
    <property type="project" value="UniProtKB"/>
</dbReference>
<dbReference type="GO" id="GO:0006814">
    <property type="term" value="P:sodium ion transport"/>
    <property type="evidence" value="ECO:0000314"/>
    <property type="project" value="UniProtKB"/>
</dbReference>
<dbReference type="CDD" id="cd06188">
    <property type="entry name" value="NADH_quinone_reductase"/>
    <property type="match status" value="1"/>
</dbReference>
<dbReference type="FunFam" id="2.40.30.10:FF:000064">
    <property type="entry name" value="Na(+)-translocating NADH-quinone reductase subunit F"/>
    <property type="match status" value="1"/>
</dbReference>
<dbReference type="FunFam" id="3.10.20.30:FF:000024">
    <property type="entry name" value="Na(+)-translocating NADH-quinone reductase subunit F"/>
    <property type="match status" value="1"/>
</dbReference>
<dbReference type="FunFam" id="3.40.50.80:FF:000014">
    <property type="entry name" value="Na(+)-translocating NADH-quinone reductase subunit F"/>
    <property type="match status" value="1"/>
</dbReference>
<dbReference type="Gene3D" id="3.10.20.30">
    <property type="match status" value="1"/>
</dbReference>
<dbReference type="Gene3D" id="3.40.50.80">
    <property type="entry name" value="Nucleotide-binding domain of ferredoxin-NADP reductase (FNR) module"/>
    <property type="match status" value="1"/>
</dbReference>
<dbReference type="Gene3D" id="2.40.30.10">
    <property type="entry name" value="Translation factors"/>
    <property type="match status" value="1"/>
</dbReference>
<dbReference type="HAMAP" id="MF_00430">
    <property type="entry name" value="NqrF"/>
    <property type="match status" value="1"/>
</dbReference>
<dbReference type="InterPro" id="IPR036010">
    <property type="entry name" value="2Fe-2S_ferredoxin-like_sf"/>
</dbReference>
<dbReference type="InterPro" id="IPR001041">
    <property type="entry name" value="2Fe-2S_ferredoxin-type"/>
</dbReference>
<dbReference type="InterPro" id="IPR012675">
    <property type="entry name" value="Beta-grasp_dom_sf"/>
</dbReference>
<dbReference type="InterPro" id="IPR008333">
    <property type="entry name" value="Cbr1-like_FAD-bd_dom"/>
</dbReference>
<dbReference type="InterPro" id="IPR017927">
    <property type="entry name" value="FAD-bd_FR_type"/>
</dbReference>
<dbReference type="InterPro" id="IPR039261">
    <property type="entry name" value="FNR_nucleotide-bd"/>
</dbReference>
<dbReference type="InterPro" id="IPR010205">
    <property type="entry name" value="NqrF"/>
</dbReference>
<dbReference type="InterPro" id="IPR001433">
    <property type="entry name" value="OxRdtase_FAD/NAD-bd"/>
</dbReference>
<dbReference type="InterPro" id="IPR017938">
    <property type="entry name" value="Riboflavin_synthase-like_b-brl"/>
</dbReference>
<dbReference type="NCBIfam" id="TIGR01941">
    <property type="entry name" value="nqrF"/>
    <property type="match status" value="1"/>
</dbReference>
<dbReference type="PANTHER" id="PTHR43644">
    <property type="entry name" value="NA(+)-TRANSLOCATING NADH-QUINONE REDUCTASE SUBUNIT"/>
    <property type="match status" value="1"/>
</dbReference>
<dbReference type="PANTHER" id="PTHR43644:SF1">
    <property type="entry name" value="NAD(P)H-FLAVIN REDUCTASE"/>
    <property type="match status" value="1"/>
</dbReference>
<dbReference type="Pfam" id="PF00970">
    <property type="entry name" value="FAD_binding_6"/>
    <property type="match status" value="1"/>
</dbReference>
<dbReference type="Pfam" id="PF00111">
    <property type="entry name" value="Fer2"/>
    <property type="match status" value="1"/>
</dbReference>
<dbReference type="Pfam" id="PF00175">
    <property type="entry name" value="NAD_binding_1"/>
    <property type="match status" value="1"/>
</dbReference>
<dbReference type="PIRSF" id="PIRSF000044">
    <property type="entry name" value="Cis_Diol_DH_RD"/>
    <property type="match status" value="1"/>
</dbReference>
<dbReference type="SUPFAM" id="SSF54292">
    <property type="entry name" value="2Fe-2S ferredoxin-like"/>
    <property type="match status" value="1"/>
</dbReference>
<dbReference type="SUPFAM" id="SSF52343">
    <property type="entry name" value="Ferredoxin reductase-like, C-terminal NADP-linked domain"/>
    <property type="match status" value="1"/>
</dbReference>
<dbReference type="SUPFAM" id="SSF63380">
    <property type="entry name" value="Riboflavin synthase domain-like"/>
    <property type="match status" value="1"/>
</dbReference>
<dbReference type="PROSITE" id="PS51085">
    <property type="entry name" value="2FE2S_FER_2"/>
    <property type="match status" value="1"/>
</dbReference>
<dbReference type="PROSITE" id="PS51384">
    <property type="entry name" value="FAD_FR"/>
    <property type="match status" value="1"/>
</dbReference>
<organism>
    <name type="scientific">Vibrio cholerae serotype O1 (strain ATCC 39541 / Classical Ogawa 395 / O395)</name>
    <dbReference type="NCBI Taxonomy" id="345073"/>
    <lineage>
        <taxon>Bacteria</taxon>
        <taxon>Pseudomonadati</taxon>
        <taxon>Pseudomonadota</taxon>
        <taxon>Gammaproteobacteria</taxon>
        <taxon>Vibrionales</taxon>
        <taxon>Vibrionaceae</taxon>
        <taxon>Vibrio</taxon>
    </lineage>
</organism>
<protein>
    <recommendedName>
        <fullName evidence="1">Na(+)-translocating NADH-quinone reductase subunit F</fullName>
        <shortName evidence="1">Na(+)-NQR subunit F</shortName>
        <shortName evidence="1">Na(+)-translocating NQR subunit F</shortName>
        <ecNumber evidence="1 2">7.2.1.1</ecNumber>
    </recommendedName>
    <alternativeName>
        <fullName evidence="1">NQR complex subunit F</fullName>
    </alternativeName>
    <alternativeName>
        <fullName evidence="1">NQR-1 subunit F</fullName>
    </alternativeName>
</protein>
<proteinExistence type="evidence at protein level"/>
<reference key="1">
    <citation type="submission" date="2007-03" db="EMBL/GenBank/DDBJ databases">
        <authorList>
            <person name="Heidelberg J."/>
        </authorList>
    </citation>
    <scope>NUCLEOTIDE SEQUENCE [LARGE SCALE GENOMIC DNA]</scope>
    <source>
        <strain>ATCC 39541 / Classical Ogawa 395 / O395</strain>
    </source>
</reference>
<reference key="2">
    <citation type="journal article" date="2008" name="PLoS ONE">
        <title>A recalibrated molecular clock and independent origins for the cholera pandemic clones.</title>
        <authorList>
            <person name="Feng L."/>
            <person name="Reeves P.R."/>
            <person name="Lan R."/>
            <person name="Ren Y."/>
            <person name="Gao C."/>
            <person name="Zhou Z."/>
            <person name="Ren Y."/>
            <person name="Cheng J."/>
            <person name="Wang W."/>
            <person name="Wang J."/>
            <person name="Qian W."/>
            <person name="Li D."/>
            <person name="Wang L."/>
        </authorList>
    </citation>
    <scope>NUCLEOTIDE SEQUENCE [LARGE SCALE GENOMIC DNA]</scope>
    <source>
        <strain>ATCC 39541 / Classical Ogawa 395 / O395</strain>
    </source>
</reference>
<reference key="3">
    <citation type="journal article" date="2002" name="Biochemistry">
        <title>Purification and characterization of the recombinant Na(+)-translocating NADH:quinone oxidoreductase from Vibrio cholerae.</title>
        <authorList>
            <person name="Barquera B."/>
            <person name="Hellwig P."/>
            <person name="Zhou W."/>
            <person name="Morgan J.E."/>
            <person name="Haese C.C."/>
            <person name="Gosink K.K."/>
            <person name="Nilges M."/>
            <person name="Bruesehoff P.J."/>
            <person name="Roth A."/>
            <person name="Lancaster C.R."/>
            <person name="Gennis R.B."/>
        </authorList>
    </citation>
    <scope>CATALYTIC ACTIVITY</scope>
    <scope>SUBUNIT</scope>
    <source>
        <strain>ATCC 39541 / Classical Ogawa 395 / O395</strain>
    </source>
</reference>
<reference key="4">
    <citation type="journal article" date="2004" name="Biochemistry">
        <title>Mutagenesis study of the 2Fe-2S center and the FAD binding site of the Na(+)-translocating NADH:ubiquinone oxidoreductase from Vibrio cholerae.</title>
        <authorList>
            <person name="Barquera B."/>
            <person name="Nilges M.J."/>
            <person name="Morgan J.E."/>
            <person name="Ramirez-Silva L."/>
            <person name="Zhou W."/>
            <person name="Gennis R.B."/>
        </authorList>
    </citation>
    <scope>COFACTOR</scope>
    <scope>MUTAGENESIS OF CYS-70; CYS-76; CYS-79; CYS-111; ARG-210; TYR-212 AND SER-246</scope>
    <source>
        <strain>ATCC 39541 / Classical Ogawa 395 / O395</strain>
    </source>
</reference>
<reference key="5">
    <citation type="journal article" date="2010" name="J. Biol. Chem.">
        <title>Localization and function of the membrane-bound riboflavin in the Na+-translocating NADH:quinone oxidoreductase (Na+-NQR) from Vibrio cholerae.</title>
        <authorList>
            <person name="Casutt M.S."/>
            <person name="Huber T."/>
            <person name="Brunisholz R."/>
            <person name="Tao M."/>
            <person name="Fritz G."/>
            <person name="Steuber J."/>
        </authorList>
    </citation>
    <scope>SUBUNIT</scope>
    <source>
        <strain>ATCC 39541 / Classical Ogawa 395 / O395</strain>
    </source>
</reference>
<gene>
    <name evidence="1 5" type="primary">nqrF</name>
    <name type="ordered locus">VC0395_A1879</name>
    <name type="ordered locus">VC395_2406</name>
</gene>
<accession>A5F5Y4</accession>
<accession>C3M414</accession>
<sequence>MSTIIFGVVMFTLIILALVLVILFAKSKLVPTGDITISINGDPEKAIVTQPGGKLLTALAGAGVFVSSACGGGGSCGQCRVKIKSGGGDILPTELDHISKGEAREGERLACQVAVKADMDLELPEEIFGVKKWECTVISNDNKATFIKELKLAIPDGESVPFRAGGYIQIEAPAHHVKYADFDVPEKYRGDWDKFNLFRYESKVDEPIIRAYSMANYPEEFGIIMLNVRIATPPPNNPNVPPGQMSSYIWSLKAGDKCTISGPFGEFFAKDTDAEMVFIGGGAGMAPMRSHIFDQLKRLKSKRKMSYWYGARSKREMFYVEDFDGLAAENDNFVWHCALSDPQPEDNWTGYTGFIHNVLYENYLKDHEAPEDCEYYMCGPPMMNAAVINMLKNLGVEEENILLDDFGG</sequence>
<feature type="chain" id="PRO_1000080595" description="Na(+)-translocating NADH-quinone reductase subunit F">
    <location>
        <begin position="1"/>
        <end position="408"/>
    </location>
</feature>
<feature type="transmembrane region" description="Helical" evidence="1">
    <location>
        <begin position="4"/>
        <end position="24"/>
    </location>
</feature>
<feature type="domain" description="2Fe-2S ferredoxin-type" evidence="1">
    <location>
        <begin position="33"/>
        <end position="127"/>
    </location>
</feature>
<feature type="domain" description="FAD-binding FR-type" evidence="1">
    <location>
        <begin position="130"/>
        <end position="270"/>
    </location>
</feature>
<feature type="binding site" evidence="1 3">
    <location>
        <position position="70"/>
    </location>
    <ligand>
        <name>[2Fe-2S] cluster</name>
        <dbReference type="ChEBI" id="CHEBI:190135"/>
    </ligand>
</feature>
<feature type="binding site" evidence="1 3">
    <location>
        <position position="76"/>
    </location>
    <ligand>
        <name>[2Fe-2S] cluster</name>
        <dbReference type="ChEBI" id="CHEBI:190135"/>
    </ligand>
</feature>
<feature type="binding site" evidence="1 3">
    <location>
        <position position="79"/>
    </location>
    <ligand>
        <name>[2Fe-2S] cluster</name>
        <dbReference type="ChEBI" id="CHEBI:190135"/>
    </ligand>
</feature>
<feature type="binding site" evidence="1 3">
    <location>
        <position position="111"/>
    </location>
    <ligand>
        <name>[2Fe-2S] cluster</name>
        <dbReference type="ChEBI" id="CHEBI:190135"/>
    </ligand>
</feature>
<feature type="mutagenesis site" description="Loss of the 2Fe-2S center, but does not affect flavin content. Exhibits very low NADH:quinone oxidoreductase activity." evidence="3">
    <original>C</original>
    <variation>A</variation>
    <location>
        <position position="70"/>
    </location>
</feature>
<feature type="mutagenesis site" description="Loss of the 2Fe-2S center, but does not affect flavin content. Exhibits very low NADH:quinone oxidoreductase activity." evidence="3">
    <original>C</original>
    <variation>A</variation>
    <location>
        <position position="76"/>
    </location>
</feature>
<feature type="mutagenesis site" description="Loss of the 2Fe-2S center, but does not affect flavin content. Exhibits very low NADH:quinone oxidoreductase activity." evidence="3">
    <original>C</original>
    <variation>A</variation>
    <location>
        <position position="79"/>
    </location>
</feature>
<feature type="mutagenesis site" description="Loss of the 2Fe-2S center, but does not affect flavin content. Exhibits very low NADH:quinone oxidoreductase activity." evidence="3">
    <original>C</original>
    <variation>A</variation>
    <location>
        <position position="111"/>
    </location>
</feature>
<feature type="mutagenesis site" description="Decreases flavin content, but does not affect the 2Fe-2S center. Exhibits very low NADH:quinone oxidoreductase activity." evidence="3">
    <original>R</original>
    <variation>L</variation>
    <location>
        <position position="210"/>
    </location>
</feature>
<feature type="mutagenesis site" description="Decreases flavin content, but does not affect the 2Fe-2S center. Exhibits very low NADH:quinone oxidoreductase activity." evidence="3">
    <original>Y</original>
    <variation>L</variation>
    <location>
        <position position="212"/>
    </location>
</feature>
<feature type="mutagenesis site" description="Decreases flavin content, but does not affect the 2Fe-2S center. Exhibits very low NADH:quinone oxidoreductase activity." evidence="3">
    <original>S</original>
    <variation>A</variation>
    <location>
        <position position="246"/>
    </location>
</feature>
<feature type="helix" evidence="9">
    <location>
        <begin position="3"/>
        <end position="29"/>
    </location>
</feature>
<feature type="strand" evidence="9">
    <location>
        <begin position="35"/>
        <end position="39"/>
    </location>
</feature>
<feature type="strand" evidence="9">
    <location>
        <begin position="42"/>
        <end position="49"/>
    </location>
</feature>
<feature type="strand" evidence="7">
    <location>
        <begin position="51"/>
        <end position="54"/>
    </location>
</feature>
<feature type="helix" evidence="9">
    <location>
        <begin position="55"/>
        <end position="61"/>
    </location>
</feature>
<feature type="strand" evidence="8">
    <location>
        <begin position="69"/>
        <end position="72"/>
    </location>
</feature>
<feature type="strand" evidence="8">
    <location>
        <begin position="74"/>
        <end position="76"/>
    </location>
</feature>
<feature type="strand" evidence="9">
    <location>
        <begin position="80"/>
        <end position="85"/>
    </location>
</feature>
<feature type="helix" evidence="9">
    <location>
        <begin position="92"/>
        <end position="95"/>
    </location>
</feature>
<feature type="helix" evidence="9">
    <location>
        <begin position="100"/>
        <end position="105"/>
    </location>
</feature>
<feature type="strand" evidence="9">
    <location>
        <begin position="107"/>
        <end position="109"/>
    </location>
</feature>
<feature type="turn" evidence="9">
    <location>
        <begin position="110"/>
        <end position="112"/>
    </location>
</feature>
<feature type="strand" evidence="8">
    <location>
        <begin position="119"/>
        <end position="121"/>
    </location>
</feature>
<feature type="helix" evidence="9">
    <location>
        <begin position="125"/>
        <end position="128"/>
    </location>
</feature>
<feature type="strand" evidence="10">
    <location>
        <begin position="131"/>
        <end position="144"/>
    </location>
</feature>
<feature type="strand" evidence="10">
    <location>
        <begin position="147"/>
        <end position="153"/>
    </location>
</feature>
<feature type="helix" evidence="10">
    <location>
        <begin position="155"/>
        <end position="157"/>
    </location>
</feature>
<feature type="strand" evidence="10">
    <location>
        <begin position="167"/>
        <end position="172"/>
    </location>
</feature>
<feature type="strand" evidence="10">
    <location>
        <begin position="174"/>
        <end position="178"/>
    </location>
</feature>
<feature type="helix" evidence="10">
    <location>
        <begin position="179"/>
        <end position="181"/>
    </location>
</feature>
<feature type="helix" evidence="10">
    <location>
        <begin position="186"/>
        <end position="188"/>
    </location>
</feature>
<feature type="helix" evidence="10">
    <location>
        <begin position="189"/>
        <end position="194"/>
    </location>
</feature>
<feature type="helix" evidence="10">
    <location>
        <begin position="197"/>
        <end position="199"/>
    </location>
</feature>
<feature type="strand" evidence="10">
    <location>
        <begin position="201"/>
        <end position="204"/>
    </location>
</feature>
<feature type="strand" evidence="10">
    <location>
        <begin position="208"/>
        <end position="213"/>
    </location>
</feature>
<feature type="strand" evidence="10">
    <location>
        <begin position="223"/>
        <end position="229"/>
    </location>
</feature>
<feature type="strand" evidence="7">
    <location>
        <begin position="235"/>
        <end position="237"/>
    </location>
</feature>
<feature type="helix" evidence="10">
    <location>
        <begin position="244"/>
        <end position="251"/>
    </location>
</feature>
<feature type="strand" evidence="10">
    <location>
        <begin position="257"/>
        <end position="264"/>
    </location>
</feature>
<feature type="strand" evidence="7">
    <location>
        <begin position="272"/>
        <end position="274"/>
    </location>
</feature>
<feature type="strand" evidence="10">
    <location>
        <begin position="276"/>
        <end position="281"/>
    </location>
</feature>
<feature type="helix" evidence="10">
    <location>
        <begin position="282"/>
        <end position="284"/>
    </location>
</feature>
<feature type="helix" evidence="10">
    <location>
        <begin position="285"/>
        <end position="296"/>
    </location>
</feature>
<feature type="turn" evidence="8">
    <location>
        <begin position="297"/>
        <end position="299"/>
    </location>
</feature>
<feature type="strand" evidence="10">
    <location>
        <begin position="305"/>
        <end position="313"/>
    </location>
</feature>
<feature type="helix" evidence="10">
    <location>
        <begin position="314"/>
        <end position="316"/>
    </location>
</feature>
<feature type="helix" evidence="10">
    <location>
        <begin position="320"/>
        <end position="329"/>
    </location>
</feature>
<feature type="strand" evidence="10">
    <location>
        <begin position="333"/>
        <end position="341"/>
    </location>
</feature>
<feature type="helix" evidence="10">
    <location>
        <begin position="344"/>
        <end position="346"/>
    </location>
</feature>
<feature type="strand" evidence="10">
    <location>
        <begin position="350"/>
        <end position="353"/>
    </location>
</feature>
<feature type="helix" evidence="10">
    <location>
        <begin position="355"/>
        <end position="362"/>
    </location>
</feature>
<feature type="turn" evidence="10">
    <location>
        <begin position="363"/>
        <end position="366"/>
    </location>
</feature>
<feature type="helix" evidence="10">
    <location>
        <begin position="370"/>
        <end position="372"/>
    </location>
</feature>
<feature type="strand" evidence="10">
    <location>
        <begin position="373"/>
        <end position="379"/>
    </location>
</feature>
<feature type="helix" evidence="10">
    <location>
        <begin position="381"/>
        <end position="393"/>
    </location>
</feature>
<feature type="helix" evidence="10">
    <location>
        <begin position="398"/>
        <end position="400"/>
    </location>
</feature>
<feature type="strand" evidence="10">
    <location>
        <begin position="401"/>
        <end position="403"/>
    </location>
</feature>
<keyword id="KW-0001">2Fe-2S</keyword>
<keyword id="KW-0002">3D-structure</keyword>
<keyword id="KW-0997">Cell inner membrane</keyword>
<keyword id="KW-1003">Cell membrane</keyword>
<keyword id="KW-0274">FAD</keyword>
<keyword id="KW-0285">Flavoprotein</keyword>
<keyword id="KW-0406">Ion transport</keyword>
<keyword id="KW-0408">Iron</keyword>
<keyword id="KW-0411">Iron-sulfur</keyword>
<keyword id="KW-0472">Membrane</keyword>
<keyword id="KW-0479">Metal-binding</keyword>
<keyword id="KW-0520">NAD</keyword>
<keyword id="KW-0915">Sodium</keyword>
<keyword id="KW-0739">Sodium transport</keyword>
<keyword id="KW-1278">Translocase</keyword>
<keyword id="KW-0812">Transmembrane</keyword>
<keyword id="KW-1133">Transmembrane helix</keyword>
<keyword id="KW-0813">Transport</keyword>
<keyword id="KW-0830">Ubiquinone</keyword>
<name>NQRF_VIBC3</name>